<protein>
    <recommendedName>
        <fullName>Putative zinc metalloprotease MJ0611</fullName>
        <ecNumber>3.4.24.-</ecNumber>
    </recommendedName>
</protein>
<gene>
    <name type="ordered locus">MJ0611</name>
</gene>
<accession>Q58028</accession>
<feature type="chain" id="PRO_0000106957" description="Putative zinc metalloprotease MJ0611">
    <location>
        <begin position="1"/>
        <end position="191"/>
    </location>
</feature>
<feature type="transmembrane region" description="Helical" evidence="2">
    <location>
        <begin position="20"/>
        <end position="40"/>
    </location>
</feature>
<feature type="transmembrane region" description="Helical" evidence="2">
    <location>
        <begin position="73"/>
        <end position="93"/>
    </location>
</feature>
<feature type="transmembrane region" description="Helical" evidence="2">
    <location>
        <begin position="110"/>
        <end position="130"/>
    </location>
</feature>
<feature type="transmembrane region" description="Helical" evidence="2">
    <location>
        <begin position="133"/>
        <end position="153"/>
    </location>
</feature>
<feature type="transmembrane region" description="Helical" evidence="2">
    <location>
        <begin position="171"/>
        <end position="191"/>
    </location>
</feature>
<feature type="active site" evidence="1">
    <location>
        <position position="50"/>
    </location>
</feature>
<feature type="binding site" evidence="1">
    <location>
        <position position="49"/>
    </location>
    <ligand>
        <name>Zn(2+)</name>
        <dbReference type="ChEBI" id="CHEBI:29105"/>
        <note>catalytic</note>
    </ligand>
</feature>
<feature type="binding site" evidence="1">
    <location>
        <position position="53"/>
    </location>
    <ligand>
        <name>Zn(2+)</name>
        <dbReference type="ChEBI" id="CHEBI:29105"/>
        <note>catalytic</note>
    </ligand>
</feature>
<sequence>MSIFRFSQREIIDLTISVLAIAFIFSYPNFSILVFIISLIAVGSGFIFHELMHRTVARKYGAWSEFRAWYEGLILGFILKLVFGATFIAPGAVYIYKDYLTPEENGKIALAGPLTNVALAFVFFILMLIFKPGSLLYWIGIFGFHINLFLAGFNMLPIPPFDGEKVLKWNPFIWAIVGLPLIGYMLYMMFW</sequence>
<reference key="1">
    <citation type="journal article" date="1996" name="Science">
        <title>Complete genome sequence of the methanogenic archaeon, Methanococcus jannaschii.</title>
        <authorList>
            <person name="Bult C.J."/>
            <person name="White O."/>
            <person name="Olsen G.J."/>
            <person name="Zhou L."/>
            <person name="Fleischmann R.D."/>
            <person name="Sutton G.G."/>
            <person name="Blake J.A."/>
            <person name="FitzGerald L.M."/>
            <person name="Clayton R.A."/>
            <person name="Gocayne J.D."/>
            <person name="Kerlavage A.R."/>
            <person name="Dougherty B.A."/>
            <person name="Tomb J.-F."/>
            <person name="Adams M.D."/>
            <person name="Reich C.I."/>
            <person name="Overbeek R."/>
            <person name="Kirkness E.F."/>
            <person name="Weinstock K.G."/>
            <person name="Merrick J.M."/>
            <person name="Glodek A."/>
            <person name="Scott J.L."/>
            <person name="Geoghagen N.S.M."/>
            <person name="Weidman J.F."/>
            <person name="Fuhrmann J.L."/>
            <person name="Nguyen D."/>
            <person name="Utterback T.R."/>
            <person name="Kelley J.M."/>
            <person name="Peterson J.D."/>
            <person name="Sadow P.W."/>
            <person name="Hanna M.C."/>
            <person name="Cotton M.D."/>
            <person name="Roberts K.M."/>
            <person name="Hurst M.A."/>
            <person name="Kaine B.P."/>
            <person name="Borodovsky M."/>
            <person name="Klenk H.-P."/>
            <person name="Fraser C.M."/>
            <person name="Smith H.O."/>
            <person name="Woese C.R."/>
            <person name="Venter J.C."/>
        </authorList>
    </citation>
    <scope>NUCLEOTIDE SEQUENCE [LARGE SCALE GENOMIC DNA]</scope>
    <source>
        <strain>ATCC 43067 / DSM 2661 / JAL-1 / JCM 10045 / NBRC 100440</strain>
    </source>
</reference>
<evidence type="ECO:0000250" key="1"/>
<evidence type="ECO:0000255" key="2"/>
<evidence type="ECO:0000305" key="3"/>
<keyword id="KW-1003">Cell membrane</keyword>
<keyword id="KW-0378">Hydrolase</keyword>
<keyword id="KW-0472">Membrane</keyword>
<keyword id="KW-0479">Metal-binding</keyword>
<keyword id="KW-0482">Metalloprotease</keyword>
<keyword id="KW-0645">Protease</keyword>
<keyword id="KW-1185">Reference proteome</keyword>
<keyword id="KW-0812">Transmembrane</keyword>
<keyword id="KW-1133">Transmembrane helix</keyword>
<keyword id="KW-0862">Zinc</keyword>
<proteinExistence type="inferred from homology"/>
<dbReference type="EC" id="3.4.24.-"/>
<dbReference type="EMBL" id="L77117">
    <property type="protein sequence ID" value="AAB98604.1"/>
    <property type="molecule type" value="Genomic_DNA"/>
</dbReference>
<dbReference type="PIR" id="C64376">
    <property type="entry name" value="C64376"/>
</dbReference>
<dbReference type="RefSeq" id="WP_010870115.1">
    <property type="nucleotide sequence ID" value="NC_000909.1"/>
</dbReference>
<dbReference type="STRING" id="243232.MJ_0611"/>
<dbReference type="PaxDb" id="243232-MJ_0611"/>
<dbReference type="EnsemblBacteria" id="AAB98604">
    <property type="protein sequence ID" value="AAB98604"/>
    <property type="gene ID" value="MJ_0611"/>
</dbReference>
<dbReference type="GeneID" id="1451476"/>
<dbReference type="KEGG" id="mja:MJ_0611"/>
<dbReference type="eggNOG" id="arCOG00614">
    <property type="taxonomic scope" value="Archaea"/>
</dbReference>
<dbReference type="HOGENOM" id="CLU_099718_0_0_2"/>
<dbReference type="InParanoid" id="Q58028"/>
<dbReference type="OrthoDB" id="86131at2157"/>
<dbReference type="PhylomeDB" id="Q58028"/>
<dbReference type="Proteomes" id="UP000000805">
    <property type="component" value="Chromosome"/>
</dbReference>
<dbReference type="GO" id="GO:0005886">
    <property type="term" value="C:plasma membrane"/>
    <property type="evidence" value="ECO:0007669"/>
    <property type="project" value="UniProtKB-SubCell"/>
</dbReference>
<dbReference type="GO" id="GO:0046872">
    <property type="term" value="F:metal ion binding"/>
    <property type="evidence" value="ECO:0007669"/>
    <property type="project" value="UniProtKB-KW"/>
</dbReference>
<dbReference type="GO" id="GO:0008237">
    <property type="term" value="F:metallopeptidase activity"/>
    <property type="evidence" value="ECO:0007669"/>
    <property type="project" value="UniProtKB-KW"/>
</dbReference>
<dbReference type="GO" id="GO:0006508">
    <property type="term" value="P:proteolysis"/>
    <property type="evidence" value="ECO:0007669"/>
    <property type="project" value="UniProtKB-KW"/>
</dbReference>
<dbReference type="CDD" id="cd06158">
    <property type="entry name" value="S2P-M50_like_1"/>
    <property type="match status" value="1"/>
</dbReference>
<dbReference type="InterPro" id="IPR052348">
    <property type="entry name" value="Metallopeptidase_M50B"/>
</dbReference>
<dbReference type="InterPro" id="IPR008915">
    <property type="entry name" value="Peptidase_M50"/>
</dbReference>
<dbReference type="InterPro" id="IPR044537">
    <property type="entry name" value="S2P-M50-like"/>
</dbReference>
<dbReference type="PANTHER" id="PTHR35864">
    <property type="entry name" value="ZINC METALLOPROTEASE MJ0611-RELATED"/>
    <property type="match status" value="1"/>
</dbReference>
<dbReference type="PANTHER" id="PTHR35864:SF1">
    <property type="entry name" value="ZINC METALLOPROTEASE YWHC-RELATED"/>
    <property type="match status" value="1"/>
</dbReference>
<dbReference type="Pfam" id="PF02163">
    <property type="entry name" value="Peptidase_M50"/>
    <property type="match status" value="1"/>
</dbReference>
<name>Y611_METJA</name>
<organism>
    <name type="scientific">Methanocaldococcus jannaschii (strain ATCC 43067 / DSM 2661 / JAL-1 / JCM 10045 / NBRC 100440)</name>
    <name type="common">Methanococcus jannaschii</name>
    <dbReference type="NCBI Taxonomy" id="243232"/>
    <lineage>
        <taxon>Archaea</taxon>
        <taxon>Methanobacteriati</taxon>
        <taxon>Methanobacteriota</taxon>
        <taxon>Methanomada group</taxon>
        <taxon>Methanococci</taxon>
        <taxon>Methanococcales</taxon>
        <taxon>Methanocaldococcaceae</taxon>
        <taxon>Methanocaldococcus</taxon>
    </lineage>
</organism>
<comment type="cofactor">
    <cofactor evidence="1">
        <name>Zn(2+)</name>
        <dbReference type="ChEBI" id="CHEBI:29105"/>
    </cofactor>
    <text evidence="1">Binds 1 zinc ion per subunit.</text>
</comment>
<comment type="subcellular location">
    <subcellularLocation>
        <location evidence="3">Cell membrane</location>
        <topology evidence="3">Multi-pass membrane protein</topology>
    </subcellularLocation>
</comment>
<comment type="similarity">
    <text evidence="3">Belongs to the peptidase M50B family.</text>
</comment>